<protein>
    <recommendedName>
        <fullName evidence="3">Protein BIG GRAIN 1-like</fullName>
    </recommendedName>
</protein>
<comment type="function">
    <text evidence="1">Involved in auxin transport. Regulator of the auxin signaling pathway.</text>
</comment>
<comment type="subcellular location">
    <subcellularLocation>
        <location evidence="1">Cell membrane</location>
    </subcellularLocation>
</comment>
<comment type="similarity">
    <text evidence="3">Belongs to the BIG GRAIN 1 (BG1) plant protein family.</text>
</comment>
<comment type="sequence caution" evidence="3">
    <conflict type="erroneous initiation">
        <sequence resource="EMBL-CDS" id="EAY78374"/>
    </conflict>
    <text>Truncated N-terminus.</text>
</comment>
<organism evidence="5">
    <name type="scientific">Oryza sativa subsp. indica</name>
    <name type="common">Rice</name>
    <dbReference type="NCBI Taxonomy" id="39946"/>
    <lineage>
        <taxon>Eukaryota</taxon>
        <taxon>Viridiplantae</taxon>
        <taxon>Streptophyta</taxon>
        <taxon>Embryophyta</taxon>
        <taxon>Tracheophyta</taxon>
        <taxon>Spermatophyta</taxon>
        <taxon>Magnoliopsida</taxon>
        <taxon>Liliopsida</taxon>
        <taxon>Poales</taxon>
        <taxon>Poaceae</taxon>
        <taxon>BOP clade</taxon>
        <taxon>Oryzoideae</taxon>
        <taxon>Oryzeae</taxon>
        <taxon>Oryzinae</taxon>
        <taxon>Oryza</taxon>
        <taxon>Oryza sativa</taxon>
    </lineage>
</organism>
<gene>
    <name evidence="4" type="ORF">OsI_33462</name>
</gene>
<keyword id="KW-0927">Auxin signaling pathway</keyword>
<keyword id="KW-1003">Cell membrane</keyword>
<keyword id="KW-0472">Membrane</keyword>
<keyword id="KW-1185">Reference proteome</keyword>
<keyword id="KW-0813">Transport</keyword>
<name>BIG1L_ORYSI</name>
<proteinExistence type="inferred from homology"/>
<accession>A2Z6Z0</accession>
<sequence>MRDMEMRWAAPAPATRGRGRARRRAPDQPSFSSTLLDAICDSMDEGGEDGRTRNAASAAAKKRQEAANSYHYYYCYKPSLAASYRAAPALGSTADCPGRGYFSSSEVEYSLRRLRPIRTSAAGGAGDGAAVARKQRHEQPDVEKTAKTKPGSASARACRRPASPGARLASLLNSIFSGKRPSAQRPACSPDYPEPACSTAPPSSSSSYARRPCHAKTLRTPPTTTTTARARPSRSRTVRFLDIDGKVAVAAAVAGCRRIPVMEVEADTDDGGEESSDASSDLFELDSLAAIAPAGGRDGSHGDELPVYGTTGVGIRRDIGRRRPYGHAPCRSWSRAV</sequence>
<dbReference type="EMBL" id="CM000135">
    <property type="protein sequence ID" value="EAY78374.1"/>
    <property type="status" value="ALT_INIT"/>
    <property type="molecule type" value="Genomic_DNA"/>
</dbReference>
<dbReference type="STRING" id="39946.A2Z6Z0"/>
<dbReference type="HOGENOM" id="CLU_048356_0_0_1"/>
<dbReference type="Proteomes" id="UP000007015">
    <property type="component" value="Chromosome 10"/>
</dbReference>
<dbReference type="GO" id="GO:0005886">
    <property type="term" value="C:plasma membrane"/>
    <property type="evidence" value="ECO:0000250"/>
    <property type="project" value="UniProtKB"/>
</dbReference>
<dbReference type="GO" id="GO:0060918">
    <property type="term" value="P:auxin transport"/>
    <property type="evidence" value="ECO:0000250"/>
    <property type="project" value="UniProtKB"/>
</dbReference>
<dbReference type="GO" id="GO:0009734">
    <property type="term" value="P:auxin-activated signaling pathway"/>
    <property type="evidence" value="ECO:0007669"/>
    <property type="project" value="UniProtKB-KW"/>
</dbReference>
<dbReference type="GO" id="GO:0010929">
    <property type="term" value="P:positive regulation of auxin mediated signaling pathway"/>
    <property type="evidence" value="ECO:0000250"/>
    <property type="project" value="UniProtKB"/>
</dbReference>
<dbReference type="InterPro" id="IPR039621">
    <property type="entry name" value="BG1-like"/>
</dbReference>
<dbReference type="PANTHER" id="PTHR33541:SF9">
    <property type="entry name" value="PROTEIN BIG GRAIN 1-LIKE"/>
    <property type="match status" value="1"/>
</dbReference>
<dbReference type="PANTHER" id="PTHR33541">
    <property type="entry name" value="PROTEIN BIG GRAIN 1-LIKE A-RELATED"/>
    <property type="match status" value="1"/>
</dbReference>
<feature type="chain" id="PRO_0000434443" description="Protein BIG GRAIN 1-like">
    <location>
        <begin position="1"/>
        <end position="337"/>
    </location>
</feature>
<feature type="region of interest" description="Disordered" evidence="2">
    <location>
        <begin position="1"/>
        <end position="32"/>
    </location>
</feature>
<feature type="region of interest" description="Disordered" evidence="2">
    <location>
        <begin position="120"/>
        <end position="163"/>
    </location>
</feature>
<feature type="region of interest" description="Disordered" evidence="2">
    <location>
        <begin position="179"/>
        <end position="233"/>
    </location>
</feature>
<feature type="compositionally biased region" description="Basic and acidic residues" evidence="2">
    <location>
        <begin position="137"/>
        <end position="146"/>
    </location>
</feature>
<feature type="compositionally biased region" description="Low complexity" evidence="2">
    <location>
        <begin position="150"/>
        <end position="163"/>
    </location>
</feature>
<feature type="compositionally biased region" description="Low complexity" evidence="2">
    <location>
        <begin position="195"/>
        <end position="209"/>
    </location>
</feature>
<feature type="compositionally biased region" description="Low complexity" evidence="2">
    <location>
        <begin position="219"/>
        <end position="230"/>
    </location>
</feature>
<evidence type="ECO:0000250" key="1">
    <source>
        <dbReference type="UniProtKB" id="Q10R09"/>
    </source>
</evidence>
<evidence type="ECO:0000256" key="2">
    <source>
        <dbReference type="SAM" id="MobiDB-lite"/>
    </source>
</evidence>
<evidence type="ECO:0000305" key="3"/>
<evidence type="ECO:0000312" key="4">
    <source>
        <dbReference type="EMBL" id="EAY78374.1"/>
    </source>
</evidence>
<evidence type="ECO:0000312" key="5">
    <source>
        <dbReference type="Proteomes" id="UP000007015"/>
    </source>
</evidence>
<reference key="1">
    <citation type="journal article" date="2005" name="PLoS Biol.">
        <title>The genomes of Oryza sativa: a history of duplications.</title>
        <authorList>
            <person name="Yu J."/>
            <person name="Wang J."/>
            <person name="Lin W."/>
            <person name="Li S."/>
            <person name="Li H."/>
            <person name="Zhou J."/>
            <person name="Ni P."/>
            <person name="Dong W."/>
            <person name="Hu S."/>
            <person name="Zeng C."/>
            <person name="Zhang J."/>
            <person name="Zhang Y."/>
            <person name="Li R."/>
            <person name="Xu Z."/>
            <person name="Li S."/>
            <person name="Li X."/>
            <person name="Zheng H."/>
            <person name="Cong L."/>
            <person name="Lin L."/>
            <person name="Yin J."/>
            <person name="Geng J."/>
            <person name="Li G."/>
            <person name="Shi J."/>
            <person name="Liu J."/>
            <person name="Lv H."/>
            <person name="Li J."/>
            <person name="Wang J."/>
            <person name="Deng Y."/>
            <person name="Ran L."/>
            <person name="Shi X."/>
            <person name="Wang X."/>
            <person name="Wu Q."/>
            <person name="Li C."/>
            <person name="Ren X."/>
            <person name="Wang J."/>
            <person name="Wang X."/>
            <person name="Li D."/>
            <person name="Liu D."/>
            <person name="Zhang X."/>
            <person name="Ji Z."/>
            <person name="Zhao W."/>
            <person name="Sun Y."/>
            <person name="Zhang Z."/>
            <person name="Bao J."/>
            <person name="Han Y."/>
            <person name="Dong L."/>
            <person name="Ji J."/>
            <person name="Chen P."/>
            <person name="Wu S."/>
            <person name="Liu J."/>
            <person name="Xiao Y."/>
            <person name="Bu D."/>
            <person name="Tan J."/>
            <person name="Yang L."/>
            <person name="Ye C."/>
            <person name="Zhang J."/>
            <person name="Xu J."/>
            <person name="Zhou Y."/>
            <person name="Yu Y."/>
            <person name="Zhang B."/>
            <person name="Zhuang S."/>
            <person name="Wei H."/>
            <person name="Liu B."/>
            <person name="Lei M."/>
            <person name="Yu H."/>
            <person name="Li Y."/>
            <person name="Xu H."/>
            <person name="Wei S."/>
            <person name="He X."/>
            <person name="Fang L."/>
            <person name="Zhang Z."/>
            <person name="Zhang Y."/>
            <person name="Huang X."/>
            <person name="Su Z."/>
            <person name="Tong W."/>
            <person name="Li J."/>
            <person name="Tong Z."/>
            <person name="Li S."/>
            <person name="Ye J."/>
            <person name="Wang L."/>
            <person name="Fang L."/>
            <person name="Lei T."/>
            <person name="Chen C.-S."/>
            <person name="Chen H.-C."/>
            <person name="Xu Z."/>
            <person name="Li H."/>
            <person name="Huang H."/>
            <person name="Zhang F."/>
            <person name="Xu H."/>
            <person name="Li N."/>
            <person name="Zhao C."/>
            <person name="Li S."/>
            <person name="Dong L."/>
            <person name="Huang Y."/>
            <person name="Li L."/>
            <person name="Xi Y."/>
            <person name="Qi Q."/>
            <person name="Li W."/>
            <person name="Zhang B."/>
            <person name="Hu W."/>
            <person name="Zhang Y."/>
            <person name="Tian X."/>
            <person name="Jiao Y."/>
            <person name="Liang X."/>
            <person name="Jin J."/>
            <person name="Gao L."/>
            <person name="Zheng W."/>
            <person name="Hao B."/>
            <person name="Liu S.-M."/>
            <person name="Wang W."/>
            <person name="Yuan L."/>
            <person name="Cao M."/>
            <person name="McDermott J."/>
            <person name="Samudrala R."/>
            <person name="Wang J."/>
            <person name="Wong G.K.-S."/>
            <person name="Yang H."/>
        </authorList>
    </citation>
    <scope>NUCLEOTIDE SEQUENCE [LARGE SCALE GENOMIC DNA]</scope>
    <source>
        <strain>cv. 93-11</strain>
    </source>
</reference>